<organism>
    <name type="scientific">Escherichia coli O157:H7 (strain EC4115 / EHEC)</name>
    <dbReference type="NCBI Taxonomy" id="444450"/>
    <lineage>
        <taxon>Bacteria</taxon>
        <taxon>Pseudomonadati</taxon>
        <taxon>Pseudomonadota</taxon>
        <taxon>Gammaproteobacteria</taxon>
        <taxon>Enterobacterales</taxon>
        <taxon>Enterobacteriaceae</taxon>
        <taxon>Escherichia</taxon>
    </lineage>
</organism>
<name>RNH_ECO5E</name>
<keyword id="KW-0963">Cytoplasm</keyword>
<keyword id="KW-0255">Endonuclease</keyword>
<keyword id="KW-0378">Hydrolase</keyword>
<keyword id="KW-0460">Magnesium</keyword>
<keyword id="KW-0479">Metal-binding</keyword>
<keyword id="KW-0540">Nuclease</keyword>
<gene>
    <name evidence="1" type="primary">rnhA</name>
    <name type="ordered locus">ECH74115_0225</name>
</gene>
<comment type="function">
    <text evidence="1">Endonuclease that specifically degrades the RNA of RNA-DNA hybrids.</text>
</comment>
<comment type="catalytic activity">
    <reaction evidence="1">
        <text>Endonucleolytic cleavage to 5'-phosphomonoester.</text>
        <dbReference type="EC" id="3.1.26.4"/>
    </reaction>
</comment>
<comment type="cofactor">
    <cofactor evidence="1">
        <name>Mg(2+)</name>
        <dbReference type="ChEBI" id="CHEBI:18420"/>
    </cofactor>
    <text evidence="1">Binds 1 Mg(2+) ion per subunit. May bind a second metal ion at a regulatory site, or after substrate binding.</text>
</comment>
<comment type="subunit">
    <text evidence="1">Monomer.</text>
</comment>
<comment type="subcellular location">
    <subcellularLocation>
        <location evidence="1">Cytoplasm</location>
    </subcellularLocation>
</comment>
<comment type="similarity">
    <text evidence="1">Belongs to the RNase H family.</text>
</comment>
<dbReference type="EC" id="3.1.26.4" evidence="1"/>
<dbReference type="EMBL" id="CP001164">
    <property type="protein sequence ID" value="ACI35007.1"/>
    <property type="molecule type" value="Genomic_DNA"/>
</dbReference>
<dbReference type="RefSeq" id="WP_000917883.1">
    <property type="nucleotide sequence ID" value="NC_011353.1"/>
</dbReference>
<dbReference type="SMR" id="B5Z0I8"/>
<dbReference type="GeneID" id="93777209"/>
<dbReference type="KEGG" id="ecf:ECH74115_0225"/>
<dbReference type="HOGENOM" id="CLU_030894_6_0_6"/>
<dbReference type="GO" id="GO:0005737">
    <property type="term" value="C:cytoplasm"/>
    <property type="evidence" value="ECO:0007669"/>
    <property type="project" value="UniProtKB-SubCell"/>
</dbReference>
<dbReference type="GO" id="GO:0000287">
    <property type="term" value="F:magnesium ion binding"/>
    <property type="evidence" value="ECO:0007669"/>
    <property type="project" value="UniProtKB-UniRule"/>
</dbReference>
<dbReference type="GO" id="GO:0003676">
    <property type="term" value="F:nucleic acid binding"/>
    <property type="evidence" value="ECO:0007669"/>
    <property type="project" value="InterPro"/>
</dbReference>
<dbReference type="GO" id="GO:0004523">
    <property type="term" value="F:RNA-DNA hybrid ribonuclease activity"/>
    <property type="evidence" value="ECO:0007669"/>
    <property type="project" value="UniProtKB-UniRule"/>
</dbReference>
<dbReference type="GO" id="GO:0043137">
    <property type="term" value="P:DNA replication, removal of RNA primer"/>
    <property type="evidence" value="ECO:0007669"/>
    <property type="project" value="TreeGrafter"/>
</dbReference>
<dbReference type="CDD" id="cd09278">
    <property type="entry name" value="RNase_HI_prokaryote_like"/>
    <property type="match status" value="1"/>
</dbReference>
<dbReference type="FunFam" id="3.30.420.10:FF:000008">
    <property type="entry name" value="Ribonuclease H"/>
    <property type="match status" value="1"/>
</dbReference>
<dbReference type="Gene3D" id="3.30.420.10">
    <property type="entry name" value="Ribonuclease H-like superfamily/Ribonuclease H"/>
    <property type="match status" value="1"/>
</dbReference>
<dbReference type="HAMAP" id="MF_00042">
    <property type="entry name" value="RNase_H"/>
    <property type="match status" value="1"/>
</dbReference>
<dbReference type="InterPro" id="IPR050092">
    <property type="entry name" value="RNase_H"/>
</dbReference>
<dbReference type="InterPro" id="IPR012337">
    <property type="entry name" value="RNaseH-like_sf"/>
</dbReference>
<dbReference type="InterPro" id="IPR002156">
    <property type="entry name" value="RNaseH_domain"/>
</dbReference>
<dbReference type="InterPro" id="IPR036397">
    <property type="entry name" value="RNaseH_sf"/>
</dbReference>
<dbReference type="InterPro" id="IPR022892">
    <property type="entry name" value="RNaseHI"/>
</dbReference>
<dbReference type="NCBIfam" id="NF001236">
    <property type="entry name" value="PRK00203.1"/>
    <property type="match status" value="1"/>
</dbReference>
<dbReference type="PANTHER" id="PTHR10642">
    <property type="entry name" value="RIBONUCLEASE H1"/>
    <property type="match status" value="1"/>
</dbReference>
<dbReference type="PANTHER" id="PTHR10642:SF26">
    <property type="entry name" value="RIBONUCLEASE H1"/>
    <property type="match status" value="1"/>
</dbReference>
<dbReference type="Pfam" id="PF00075">
    <property type="entry name" value="RNase_H"/>
    <property type="match status" value="1"/>
</dbReference>
<dbReference type="SUPFAM" id="SSF53098">
    <property type="entry name" value="Ribonuclease H-like"/>
    <property type="match status" value="1"/>
</dbReference>
<dbReference type="PROSITE" id="PS50879">
    <property type="entry name" value="RNASE_H_1"/>
    <property type="match status" value="1"/>
</dbReference>
<sequence>MLKQVEIFTDGSCLGNPGPGGYGAILRYRGREKTFSAGYTRTTNNRMELMAAIVALEALKEHCEVILSTDSQYVRQGITQWIHNWKKRGWKTADKKPVKNVDLWQRLDAALGQHQIKWEWVKGHAGHPENERCDELARAAAMNPTLEDTGYQVEV</sequence>
<evidence type="ECO:0000255" key="1">
    <source>
        <dbReference type="HAMAP-Rule" id="MF_00042"/>
    </source>
</evidence>
<evidence type="ECO:0000255" key="2">
    <source>
        <dbReference type="PROSITE-ProRule" id="PRU00408"/>
    </source>
</evidence>
<proteinExistence type="inferred from homology"/>
<protein>
    <recommendedName>
        <fullName evidence="1">Ribonuclease H</fullName>
        <shortName evidence="1">RNase H</shortName>
        <ecNumber evidence="1">3.1.26.4</ecNumber>
    </recommendedName>
</protein>
<accession>B5Z0I8</accession>
<feature type="chain" id="PRO_1000090898" description="Ribonuclease H">
    <location>
        <begin position="1"/>
        <end position="155"/>
    </location>
</feature>
<feature type="domain" description="RNase H type-1" evidence="2">
    <location>
        <begin position="1"/>
        <end position="142"/>
    </location>
</feature>
<feature type="binding site" evidence="1">
    <location>
        <position position="10"/>
    </location>
    <ligand>
        <name>Mg(2+)</name>
        <dbReference type="ChEBI" id="CHEBI:18420"/>
        <label>1</label>
    </ligand>
</feature>
<feature type="binding site" evidence="1">
    <location>
        <position position="10"/>
    </location>
    <ligand>
        <name>Mg(2+)</name>
        <dbReference type="ChEBI" id="CHEBI:18420"/>
        <label>2</label>
    </ligand>
</feature>
<feature type="binding site" evidence="1">
    <location>
        <position position="48"/>
    </location>
    <ligand>
        <name>Mg(2+)</name>
        <dbReference type="ChEBI" id="CHEBI:18420"/>
        <label>1</label>
    </ligand>
</feature>
<feature type="binding site" evidence="1">
    <location>
        <position position="70"/>
    </location>
    <ligand>
        <name>Mg(2+)</name>
        <dbReference type="ChEBI" id="CHEBI:18420"/>
        <label>1</label>
    </ligand>
</feature>
<feature type="binding site" evidence="1">
    <location>
        <position position="134"/>
    </location>
    <ligand>
        <name>Mg(2+)</name>
        <dbReference type="ChEBI" id="CHEBI:18420"/>
        <label>2</label>
    </ligand>
</feature>
<reference key="1">
    <citation type="journal article" date="2011" name="Proc. Natl. Acad. Sci. U.S.A.">
        <title>Genomic anatomy of Escherichia coli O157:H7 outbreaks.</title>
        <authorList>
            <person name="Eppinger M."/>
            <person name="Mammel M.K."/>
            <person name="Leclerc J.E."/>
            <person name="Ravel J."/>
            <person name="Cebula T.A."/>
        </authorList>
    </citation>
    <scope>NUCLEOTIDE SEQUENCE [LARGE SCALE GENOMIC DNA]</scope>
    <source>
        <strain>EC4115 / EHEC</strain>
    </source>
</reference>